<gene>
    <name type="primary">MT-ND1</name>
    <name type="synonym">MTND1</name>
    <name type="synonym">NADH1</name>
    <name type="synonym">ND1</name>
</gene>
<sequence length="323" mass="35412">MTNIVVSYILNPLIYMVPVLLAVAFLTLIERKVLGYMQLRKGPNIVGPYGLLQPIADGVKLFIKEPIRPSTSSPSLFVLPVLALTLALTLWAPMPMPFPVADLNLSILFVLALSSLAVYSILGSGWASNSKYALVGALRAVAQTISYEVSLGLILLSVIIFSGGFTLQTFSTTQEATWLALPAWPLAAMWYISTLEETNRAPFDLTEGESELVSGFNVEYAGGPFALFFLAEYANILLMNTLSAVLFLGSSYSTTMPEFTSLTLMTKAALLSMVFLWVRASYPRFRYDQLMHLVWKNFLPLTLALVIWHLSLSTACAGLPPHA</sequence>
<accession>P55779</accession>
<proteinExistence type="inferred from homology"/>
<dbReference type="EC" id="7.1.1.2"/>
<dbReference type="EMBL" id="X99772">
    <property type="protein sequence ID" value="CAA68106.1"/>
    <property type="molecule type" value="Genomic_DNA"/>
</dbReference>
<dbReference type="PIR" id="T11820">
    <property type="entry name" value="T11820"/>
</dbReference>
<dbReference type="RefSeq" id="NP_008613.1">
    <property type="nucleotide sequence ID" value="NC_002081.1"/>
</dbReference>
<dbReference type="SMR" id="P55779"/>
<dbReference type="GeneID" id="808449"/>
<dbReference type="CTD" id="4535"/>
<dbReference type="OrthoDB" id="531329at2759"/>
<dbReference type="Proteomes" id="UP000694546">
    <property type="component" value="Unplaced"/>
</dbReference>
<dbReference type="GO" id="GO:0005743">
    <property type="term" value="C:mitochondrial inner membrane"/>
    <property type="evidence" value="ECO:0007669"/>
    <property type="project" value="UniProtKB-SubCell"/>
</dbReference>
<dbReference type="GO" id="GO:0008137">
    <property type="term" value="F:NADH dehydrogenase (ubiquinone) activity"/>
    <property type="evidence" value="ECO:0007669"/>
    <property type="project" value="UniProtKB-EC"/>
</dbReference>
<dbReference type="GO" id="GO:0009060">
    <property type="term" value="P:aerobic respiration"/>
    <property type="evidence" value="ECO:0007669"/>
    <property type="project" value="TreeGrafter"/>
</dbReference>
<dbReference type="HAMAP" id="MF_01350">
    <property type="entry name" value="NDH1_NuoH"/>
    <property type="match status" value="1"/>
</dbReference>
<dbReference type="InterPro" id="IPR001694">
    <property type="entry name" value="NADH_UbQ_OxRdtase_su1/FPO"/>
</dbReference>
<dbReference type="InterPro" id="IPR018086">
    <property type="entry name" value="NADH_UbQ_OxRdtase_su1_CS"/>
</dbReference>
<dbReference type="PANTHER" id="PTHR11432">
    <property type="entry name" value="NADH DEHYDROGENASE SUBUNIT 1"/>
    <property type="match status" value="1"/>
</dbReference>
<dbReference type="PANTHER" id="PTHR11432:SF3">
    <property type="entry name" value="NADH-UBIQUINONE OXIDOREDUCTASE CHAIN 1"/>
    <property type="match status" value="1"/>
</dbReference>
<dbReference type="Pfam" id="PF00146">
    <property type="entry name" value="NADHdh"/>
    <property type="match status" value="1"/>
</dbReference>
<dbReference type="PROSITE" id="PS00667">
    <property type="entry name" value="COMPLEX1_ND1_1"/>
    <property type="match status" value="1"/>
</dbReference>
<dbReference type="PROSITE" id="PS00668">
    <property type="entry name" value="COMPLEX1_ND1_2"/>
    <property type="match status" value="1"/>
</dbReference>
<keyword id="KW-0249">Electron transport</keyword>
<keyword id="KW-0472">Membrane</keyword>
<keyword id="KW-0496">Mitochondrion</keyword>
<keyword id="KW-0999">Mitochondrion inner membrane</keyword>
<keyword id="KW-0520">NAD</keyword>
<keyword id="KW-1185">Reference proteome</keyword>
<keyword id="KW-0679">Respiratory chain</keyword>
<keyword id="KW-1278">Translocase</keyword>
<keyword id="KW-0812">Transmembrane</keyword>
<keyword id="KW-1133">Transmembrane helix</keyword>
<keyword id="KW-0813">Transport</keyword>
<keyword id="KW-0830">Ubiquinone</keyword>
<evidence type="ECO:0000250" key="1"/>
<evidence type="ECO:0000255" key="2"/>
<evidence type="ECO:0000305" key="3"/>
<feature type="chain" id="PRO_0000117407" description="NADH-ubiquinone oxidoreductase chain 1">
    <location>
        <begin position="1"/>
        <end position="323"/>
    </location>
</feature>
<feature type="transmembrane region" description="Helical" evidence="2">
    <location>
        <begin position="9"/>
        <end position="29"/>
    </location>
</feature>
<feature type="transmembrane region" description="Helical" evidence="2">
    <location>
        <begin position="76"/>
        <end position="96"/>
    </location>
</feature>
<feature type="transmembrane region" description="Helical" evidence="2">
    <location>
        <begin position="107"/>
        <end position="127"/>
    </location>
</feature>
<feature type="transmembrane region" description="Helical" evidence="2">
    <location>
        <begin position="145"/>
        <end position="165"/>
    </location>
</feature>
<feature type="transmembrane region" description="Helical" evidence="2">
    <location>
        <begin position="175"/>
        <end position="195"/>
    </location>
</feature>
<feature type="transmembrane region" description="Helical" evidence="2">
    <location>
        <begin position="227"/>
        <end position="247"/>
    </location>
</feature>
<feature type="transmembrane region" description="Helical" evidence="2">
    <location>
        <begin position="258"/>
        <end position="278"/>
    </location>
</feature>
<feature type="transmembrane region" description="Helical" evidence="2">
    <location>
        <begin position="298"/>
        <end position="318"/>
    </location>
</feature>
<protein>
    <recommendedName>
        <fullName>NADH-ubiquinone oxidoreductase chain 1</fullName>
        <ecNumber>7.1.1.2</ecNumber>
    </recommendedName>
    <alternativeName>
        <fullName>NADH dehydrogenase subunit 1</fullName>
    </alternativeName>
</protein>
<reference key="1">
    <citation type="journal article" date="1996" name="Mol. Mar. Biol. Biotechnol.">
        <title>The complete mitochondrial DNA sequence of Atlantic cod (Gadus morhua): relevance to taxonomic studies among codfishes.</title>
        <authorList>
            <person name="Johansen S."/>
            <person name="Bakke I."/>
        </authorList>
    </citation>
    <scope>NUCLEOTIDE SEQUENCE [GENOMIC DNA]</scope>
    <source>
        <strain>Norwegian coastal 1</strain>
    </source>
</reference>
<comment type="function">
    <text evidence="1">Core subunit of the mitochondrial membrane respiratory chain NADH dehydrogenase (Complex I) that is believed to belong to the minimal assembly required for catalysis. Complex I functions in the transfer of electrons from NADH to the respiratory chain. The immediate electron acceptor for the enzyme is believed to be ubiquinone (By similarity).</text>
</comment>
<comment type="catalytic activity">
    <reaction>
        <text>a ubiquinone + NADH + 5 H(+)(in) = a ubiquinol + NAD(+) + 4 H(+)(out)</text>
        <dbReference type="Rhea" id="RHEA:29091"/>
        <dbReference type="Rhea" id="RHEA-COMP:9565"/>
        <dbReference type="Rhea" id="RHEA-COMP:9566"/>
        <dbReference type="ChEBI" id="CHEBI:15378"/>
        <dbReference type="ChEBI" id="CHEBI:16389"/>
        <dbReference type="ChEBI" id="CHEBI:17976"/>
        <dbReference type="ChEBI" id="CHEBI:57540"/>
        <dbReference type="ChEBI" id="CHEBI:57945"/>
        <dbReference type="EC" id="7.1.1.2"/>
    </reaction>
</comment>
<comment type="subcellular location">
    <subcellularLocation>
        <location evidence="1">Mitochondrion inner membrane</location>
        <topology evidence="1">Multi-pass membrane protein</topology>
    </subcellularLocation>
</comment>
<comment type="similarity">
    <text evidence="3">Belongs to the complex I subunit 1 family.</text>
</comment>
<organism>
    <name type="scientific">Gadus morhua</name>
    <name type="common">Atlantic cod</name>
    <dbReference type="NCBI Taxonomy" id="8049"/>
    <lineage>
        <taxon>Eukaryota</taxon>
        <taxon>Metazoa</taxon>
        <taxon>Chordata</taxon>
        <taxon>Craniata</taxon>
        <taxon>Vertebrata</taxon>
        <taxon>Euteleostomi</taxon>
        <taxon>Actinopterygii</taxon>
        <taxon>Neopterygii</taxon>
        <taxon>Teleostei</taxon>
        <taxon>Neoteleostei</taxon>
        <taxon>Acanthomorphata</taxon>
        <taxon>Zeiogadaria</taxon>
        <taxon>Gadariae</taxon>
        <taxon>Gadiformes</taxon>
        <taxon>Gadoidei</taxon>
        <taxon>Gadidae</taxon>
        <taxon>Gadus</taxon>
    </lineage>
</organism>
<name>NU1M_GADMO</name>
<geneLocation type="mitochondrion"/>